<reference key="1">
    <citation type="submission" date="2007-11" db="EMBL/GenBank/DDBJ databases">
        <title>Complete sequence of chromosome of Shewanella baltica OS195.</title>
        <authorList>
            <consortium name="US DOE Joint Genome Institute"/>
            <person name="Copeland A."/>
            <person name="Lucas S."/>
            <person name="Lapidus A."/>
            <person name="Barry K."/>
            <person name="Glavina del Rio T."/>
            <person name="Dalin E."/>
            <person name="Tice H."/>
            <person name="Pitluck S."/>
            <person name="Chain P."/>
            <person name="Malfatti S."/>
            <person name="Shin M."/>
            <person name="Vergez L."/>
            <person name="Schmutz J."/>
            <person name="Larimer F."/>
            <person name="Land M."/>
            <person name="Hauser L."/>
            <person name="Kyrpides N."/>
            <person name="Kim E."/>
            <person name="Brettar I."/>
            <person name="Rodrigues J."/>
            <person name="Konstantinidis K."/>
            <person name="Klappenbach J."/>
            <person name="Hofle M."/>
            <person name="Tiedje J."/>
            <person name="Richardson P."/>
        </authorList>
    </citation>
    <scope>NUCLEOTIDE SEQUENCE [LARGE SCALE GENOMIC DNA]</scope>
    <source>
        <strain>OS195</strain>
    </source>
</reference>
<proteinExistence type="inferred from homology"/>
<organism>
    <name type="scientific">Shewanella baltica (strain OS195)</name>
    <dbReference type="NCBI Taxonomy" id="399599"/>
    <lineage>
        <taxon>Bacteria</taxon>
        <taxon>Pseudomonadati</taxon>
        <taxon>Pseudomonadota</taxon>
        <taxon>Gammaproteobacteria</taxon>
        <taxon>Alteromonadales</taxon>
        <taxon>Shewanellaceae</taxon>
        <taxon>Shewanella</taxon>
    </lineage>
</organism>
<sequence length="856" mass="95389">MNVIDTDDLEKHTPMMRQYLTMKAEHHDMLLFYRMGDFYELFYDDAKRASELLGISLTARGKSGGDPIPMAGLPYHAVEGYLAKLVQIGQSVAICEQIGDPATSKGPVERKVVRIVTPGTLTDEALLQERQDNLLAAVYQGKIGFGYATLDVSSGRFVIAELDTRESLEAELQRTNPVEILYSEDFGELGLLNGFKGKRRRPEWEFDYDTSIKLLLTQFGTKDLHGFGIADARLSLQAAGCLMQYVKDTQRTALPHINAITRFNQTDSIVLDAATRRNLELTQNLAGGRDNTLAAVLDNTATPMGSRMLQRWIHQPLRDPKHIKARQQAVTELLDTTAHEGLHEQLKALGDIERIMARLALRTARPRDFARLRQALGLLPELQQSLSTLSAPHTTQLRQHIGEFPAEQALLERAIVDNPPMLIRDGGVIREGYNSELDEWRGLSEGASDYLVQLEAREKERTGINTLKVGYNRVHGYYIEVSRLQSSQVPLNYQRRQTLKNMERYITPELKEYEEKVLSSQGKALALEKQLWEQLFDLILPKLHELQAFARAAAELDVLSNFAERAETLGYTCPELSQDIGVQIEAGRHPVVERVSQTPFIANPVTLHNQRRMLIVTGPNMGGKSTYMRQVALITLMAHIGCFVPADRALIGPIDRIFTRIGASDDLASGRSTFMVEMTETANILHNASASSLVLMDEIGRGTSTYDGLSLAWSAAEYLAQQVGAMTLFATHYFELTQLPELMAGVYNVHLDAIEHDDTIAFMHAVQEGAASKSYGLQVAALAGVPNKVIKAAKHKLQQLESRDHQAEGTRTPIQSLLALPEPVENPALTKLSNINPDNLTPKQALDLLYELKRLS</sequence>
<protein>
    <recommendedName>
        <fullName evidence="1">DNA mismatch repair protein MutS</fullName>
    </recommendedName>
</protein>
<name>MUTS_SHEB9</name>
<gene>
    <name evidence="1" type="primary">mutS</name>
    <name type="ordered locus">Sbal195_3270</name>
</gene>
<evidence type="ECO:0000255" key="1">
    <source>
        <dbReference type="HAMAP-Rule" id="MF_00096"/>
    </source>
</evidence>
<comment type="function">
    <text evidence="1">This protein is involved in the repair of mismatches in DNA. It is possible that it carries out the mismatch recognition step. This protein has a weak ATPase activity.</text>
</comment>
<comment type="similarity">
    <text evidence="1">Belongs to the DNA mismatch repair MutS family.</text>
</comment>
<feature type="chain" id="PRO_1000075560" description="DNA mismatch repair protein MutS">
    <location>
        <begin position="1"/>
        <end position="856"/>
    </location>
</feature>
<feature type="binding site" evidence="1">
    <location>
        <begin position="618"/>
        <end position="625"/>
    </location>
    <ligand>
        <name>ATP</name>
        <dbReference type="ChEBI" id="CHEBI:30616"/>
    </ligand>
</feature>
<accession>A9KYG1</accession>
<keyword id="KW-0067">ATP-binding</keyword>
<keyword id="KW-0227">DNA damage</keyword>
<keyword id="KW-0234">DNA repair</keyword>
<keyword id="KW-0238">DNA-binding</keyword>
<keyword id="KW-0547">Nucleotide-binding</keyword>
<dbReference type="EMBL" id="CP000891">
    <property type="protein sequence ID" value="ABX50432.1"/>
    <property type="molecule type" value="Genomic_DNA"/>
</dbReference>
<dbReference type="RefSeq" id="WP_012197440.1">
    <property type="nucleotide sequence ID" value="NC_009997.1"/>
</dbReference>
<dbReference type="SMR" id="A9KYG1"/>
<dbReference type="GeneID" id="11774907"/>
<dbReference type="KEGG" id="sbn:Sbal195_3270"/>
<dbReference type="HOGENOM" id="CLU_002472_4_0_6"/>
<dbReference type="Proteomes" id="UP000000770">
    <property type="component" value="Chromosome"/>
</dbReference>
<dbReference type="GO" id="GO:0005829">
    <property type="term" value="C:cytosol"/>
    <property type="evidence" value="ECO:0007669"/>
    <property type="project" value="TreeGrafter"/>
</dbReference>
<dbReference type="GO" id="GO:0005524">
    <property type="term" value="F:ATP binding"/>
    <property type="evidence" value="ECO:0007669"/>
    <property type="project" value="UniProtKB-UniRule"/>
</dbReference>
<dbReference type="GO" id="GO:0140664">
    <property type="term" value="F:ATP-dependent DNA damage sensor activity"/>
    <property type="evidence" value="ECO:0007669"/>
    <property type="project" value="InterPro"/>
</dbReference>
<dbReference type="GO" id="GO:0003684">
    <property type="term" value="F:damaged DNA binding"/>
    <property type="evidence" value="ECO:0007669"/>
    <property type="project" value="UniProtKB-UniRule"/>
</dbReference>
<dbReference type="GO" id="GO:0030983">
    <property type="term" value="F:mismatched DNA binding"/>
    <property type="evidence" value="ECO:0007669"/>
    <property type="project" value="InterPro"/>
</dbReference>
<dbReference type="GO" id="GO:0006298">
    <property type="term" value="P:mismatch repair"/>
    <property type="evidence" value="ECO:0007669"/>
    <property type="project" value="UniProtKB-UniRule"/>
</dbReference>
<dbReference type="CDD" id="cd03284">
    <property type="entry name" value="ABC_MutS1"/>
    <property type="match status" value="1"/>
</dbReference>
<dbReference type="FunFam" id="1.10.1420.10:FF:000002">
    <property type="entry name" value="DNA mismatch repair protein MutS"/>
    <property type="match status" value="1"/>
</dbReference>
<dbReference type="FunFam" id="3.30.420.110:FF:000001">
    <property type="entry name" value="DNA mismatch repair protein MutS"/>
    <property type="match status" value="1"/>
</dbReference>
<dbReference type="FunFam" id="3.40.1170.10:FF:000001">
    <property type="entry name" value="DNA mismatch repair protein MutS"/>
    <property type="match status" value="1"/>
</dbReference>
<dbReference type="FunFam" id="3.40.50.300:FF:000283">
    <property type="entry name" value="DNA mismatch repair protein MutS"/>
    <property type="match status" value="1"/>
</dbReference>
<dbReference type="Gene3D" id="1.10.1420.10">
    <property type="match status" value="2"/>
</dbReference>
<dbReference type="Gene3D" id="6.10.140.430">
    <property type="match status" value="1"/>
</dbReference>
<dbReference type="Gene3D" id="3.40.1170.10">
    <property type="entry name" value="DNA repair protein MutS, domain I"/>
    <property type="match status" value="1"/>
</dbReference>
<dbReference type="Gene3D" id="3.30.420.110">
    <property type="entry name" value="MutS, connector domain"/>
    <property type="match status" value="1"/>
</dbReference>
<dbReference type="Gene3D" id="3.40.50.300">
    <property type="entry name" value="P-loop containing nucleotide triphosphate hydrolases"/>
    <property type="match status" value="1"/>
</dbReference>
<dbReference type="HAMAP" id="MF_00096">
    <property type="entry name" value="MutS"/>
    <property type="match status" value="1"/>
</dbReference>
<dbReference type="InterPro" id="IPR005748">
    <property type="entry name" value="DNA_mismatch_repair_MutS"/>
</dbReference>
<dbReference type="InterPro" id="IPR007695">
    <property type="entry name" value="DNA_mismatch_repair_MutS-lik_N"/>
</dbReference>
<dbReference type="InterPro" id="IPR017261">
    <property type="entry name" value="DNA_mismatch_repair_MutS/MSH"/>
</dbReference>
<dbReference type="InterPro" id="IPR000432">
    <property type="entry name" value="DNA_mismatch_repair_MutS_C"/>
</dbReference>
<dbReference type="InterPro" id="IPR007861">
    <property type="entry name" value="DNA_mismatch_repair_MutS_clamp"/>
</dbReference>
<dbReference type="InterPro" id="IPR007696">
    <property type="entry name" value="DNA_mismatch_repair_MutS_core"/>
</dbReference>
<dbReference type="InterPro" id="IPR016151">
    <property type="entry name" value="DNA_mismatch_repair_MutS_N"/>
</dbReference>
<dbReference type="InterPro" id="IPR036187">
    <property type="entry name" value="DNA_mismatch_repair_MutS_sf"/>
</dbReference>
<dbReference type="InterPro" id="IPR007860">
    <property type="entry name" value="DNA_mmatch_repair_MutS_con_dom"/>
</dbReference>
<dbReference type="InterPro" id="IPR045076">
    <property type="entry name" value="MutS"/>
</dbReference>
<dbReference type="InterPro" id="IPR036678">
    <property type="entry name" value="MutS_con_dom_sf"/>
</dbReference>
<dbReference type="InterPro" id="IPR027417">
    <property type="entry name" value="P-loop_NTPase"/>
</dbReference>
<dbReference type="NCBIfam" id="TIGR01070">
    <property type="entry name" value="mutS1"/>
    <property type="match status" value="1"/>
</dbReference>
<dbReference type="NCBIfam" id="NF003810">
    <property type="entry name" value="PRK05399.1"/>
    <property type="match status" value="1"/>
</dbReference>
<dbReference type="PANTHER" id="PTHR11361:SF34">
    <property type="entry name" value="DNA MISMATCH REPAIR PROTEIN MSH1, MITOCHONDRIAL"/>
    <property type="match status" value="1"/>
</dbReference>
<dbReference type="PANTHER" id="PTHR11361">
    <property type="entry name" value="DNA MISMATCH REPAIR PROTEIN MUTS FAMILY MEMBER"/>
    <property type="match status" value="1"/>
</dbReference>
<dbReference type="Pfam" id="PF01624">
    <property type="entry name" value="MutS_I"/>
    <property type="match status" value="1"/>
</dbReference>
<dbReference type="Pfam" id="PF05188">
    <property type="entry name" value="MutS_II"/>
    <property type="match status" value="1"/>
</dbReference>
<dbReference type="Pfam" id="PF05192">
    <property type="entry name" value="MutS_III"/>
    <property type="match status" value="1"/>
</dbReference>
<dbReference type="Pfam" id="PF05190">
    <property type="entry name" value="MutS_IV"/>
    <property type="match status" value="1"/>
</dbReference>
<dbReference type="Pfam" id="PF00488">
    <property type="entry name" value="MutS_V"/>
    <property type="match status" value="1"/>
</dbReference>
<dbReference type="PIRSF" id="PIRSF037677">
    <property type="entry name" value="DNA_mis_repair_Msh6"/>
    <property type="match status" value="1"/>
</dbReference>
<dbReference type="SMART" id="SM00534">
    <property type="entry name" value="MUTSac"/>
    <property type="match status" value="1"/>
</dbReference>
<dbReference type="SMART" id="SM00533">
    <property type="entry name" value="MUTSd"/>
    <property type="match status" value="1"/>
</dbReference>
<dbReference type="SUPFAM" id="SSF55271">
    <property type="entry name" value="DNA repair protein MutS, domain I"/>
    <property type="match status" value="1"/>
</dbReference>
<dbReference type="SUPFAM" id="SSF53150">
    <property type="entry name" value="DNA repair protein MutS, domain II"/>
    <property type="match status" value="1"/>
</dbReference>
<dbReference type="SUPFAM" id="SSF48334">
    <property type="entry name" value="DNA repair protein MutS, domain III"/>
    <property type="match status" value="1"/>
</dbReference>
<dbReference type="SUPFAM" id="SSF52540">
    <property type="entry name" value="P-loop containing nucleoside triphosphate hydrolases"/>
    <property type="match status" value="1"/>
</dbReference>
<dbReference type="PROSITE" id="PS00486">
    <property type="entry name" value="DNA_MISMATCH_REPAIR_2"/>
    <property type="match status" value="1"/>
</dbReference>